<keyword id="KW-0028">Amino-acid biosynthesis</keyword>
<keyword id="KW-0057">Aromatic amino acid biosynthesis</keyword>
<keyword id="KW-0413">Isomerase</keyword>
<keyword id="KW-1185">Reference proteome</keyword>
<keyword id="KW-0822">Tryptophan biosynthesis</keyword>
<gene>
    <name evidence="1" type="primary">trpF</name>
    <name type="ordered locus">AZC_1017</name>
</gene>
<protein>
    <recommendedName>
        <fullName evidence="1">N-(5'-phosphoribosyl)anthranilate isomerase</fullName>
        <shortName evidence="1">PRAI</shortName>
        <ecNumber evidence="1">5.3.1.24</ecNumber>
    </recommendedName>
</protein>
<feature type="chain" id="PRO_1000071437" description="N-(5'-phosphoribosyl)anthranilate isomerase">
    <location>
        <begin position="1"/>
        <end position="228"/>
    </location>
</feature>
<comment type="catalytic activity">
    <reaction evidence="1">
        <text>N-(5-phospho-beta-D-ribosyl)anthranilate = 1-(2-carboxyphenylamino)-1-deoxy-D-ribulose 5-phosphate</text>
        <dbReference type="Rhea" id="RHEA:21540"/>
        <dbReference type="ChEBI" id="CHEBI:18277"/>
        <dbReference type="ChEBI" id="CHEBI:58613"/>
        <dbReference type="EC" id="5.3.1.24"/>
    </reaction>
</comment>
<comment type="pathway">
    <text evidence="1">Amino-acid biosynthesis; L-tryptophan biosynthesis; L-tryptophan from chorismate: step 3/5.</text>
</comment>
<comment type="similarity">
    <text evidence="1">Belongs to the TrpF family.</text>
</comment>
<reference key="1">
    <citation type="submission" date="2007-04" db="EMBL/GenBank/DDBJ databases">
        <title>Complete genome sequence of the nitrogen-fixing bacterium Azorhizobium caulinodans ORS571.</title>
        <authorList>
            <person name="Lee K.B."/>
            <person name="Backer P.D."/>
            <person name="Aono T."/>
            <person name="Liu C.T."/>
            <person name="Suzuki S."/>
            <person name="Suzuki T."/>
            <person name="Kaneko T."/>
            <person name="Yamada M."/>
            <person name="Tabata S."/>
            <person name="Kupfer D.M."/>
            <person name="Najar F.Z."/>
            <person name="Wiley G.B."/>
            <person name="Roe B."/>
            <person name="Binnewies T."/>
            <person name="Ussery D."/>
            <person name="Vereecke D."/>
            <person name="Gevers D."/>
            <person name="Holsters M."/>
            <person name="Oyaizu H."/>
        </authorList>
    </citation>
    <scope>NUCLEOTIDE SEQUENCE [LARGE SCALE GENOMIC DNA]</scope>
    <source>
        <strain>ATCC 43989 / DSM 5975 / JCM 20966 / LMG 6465 / NBRC 14845 / NCIMB 13405 / ORS 571</strain>
    </source>
</reference>
<evidence type="ECO:0000255" key="1">
    <source>
        <dbReference type="HAMAP-Rule" id="MF_00135"/>
    </source>
</evidence>
<accession>A8HQ40</accession>
<dbReference type="EC" id="5.3.1.24" evidence="1"/>
<dbReference type="EMBL" id="AP009384">
    <property type="protein sequence ID" value="BAF87015.1"/>
    <property type="molecule type" value="Genomic_DNA"/>
</dbReference>
<dbReference type="RefSeq" id="WP_012169548.1">
    <property type="nucleotide sequence ID" value="NC_009937.1"/>
</dbReference>
<dbReference type="SMR" id="A8HQ40"/>
<dbReference type="STRING" id="438753.AZC_1017"/>
<dbReference type="KEGG" id="azc:AZC_1017"/>
<dbReference type="eggNOG" id="COG0135">
    <property type="taxonomic scope" value="Bacteria"/>
</dbReference>
<dbReference type="HOGENOM" id="CLU_076364_1_1_5"/>
<dbReference type="UniPathway" id="UPA00035">
    <property type="reaction ID" value="UER00042"/>
</dbReference>
<dbReference type="Proteomes" id="UP000000270">
    <property type="component" value="Chromosome"/>
</dbReference>
<dbReference type="GO" id="GO:0004640">
    <property type="term" value="F:phosphoribosylanthranilate isomerase activity"/>
    <property type="evidence" value="ECO:0007669"/>
    <property type="project" value="UniProtKB-UniRule"/>
</dbReference>
<dbReference type="GO" id="GO:0000162">
    <property type="term" value="P:L-tryptophan biosynthetic process"/>
    <property type="evidence" value="ECO:0007669"/>
    <property type="project" value="UniProtKB-UniRule"/>
</dbReference>
<dbReference type="CDD" id="cd00405">
    <property type="entry name" value="PRAI"/>
    <property type="match status" value="1"/>
</dbReference>
<dbReference type="Gene3D" id="3.20.20.70">
    <property type="entry name" value="Aldolase class I"/>
    <property type="match status" value="1"/>
</dbReference>
<dbReference type="HAMAP" id="MF_00135">
    <property type="entry name" value="PRAI"/>
    <property type="match status" value="1"/>
</dbReference>
<dbReference type="InterPro" id="IPR013785">
    <property type="entry name" value="Aldolase_TIM"/>
</dbReference>
<dbReference type="InterPro" id="IPR001240">
    <property type="entry name" value="PRAI_dom"/>
</dbReference>
<dbReference type="InterPro" id="IPR011060">
    <property type="entry name" value="RibuloseP-bd_barrel"/>
</dbReference>
<dbReference type="InterPro" id="IPR044643">
    <property type="entry name" value="TrpF_fam"/>
</dbReference>
<dbReference type="NCBIfam" id="NF002295">
    <property type="entry name" value="PRK01222.1-1"/>
    <property type="match status" value="1"/>
</dbReference>
<dbReference type="PANTHER" id="PTHR42894">
    <property type="entry name" value="N-(5'-PHOSPHORIBOSYL)ANTHRANILATE ISOMERASE"/>
    <property type="match status" value="1"/>
</dbReference>
<dbReference type="PANTHER" id="PTHR42894:SF1">
    <property type="entry name" value="N-(5'-PHOSPHORIBOSYL)ANTHRANILATE ISOMERASE"/>
    <property type="match status" value="1"/>
</dbReference>
<dbReference type="Pfam" id="PF00697">
    <property type="entry name" value="PRAI"/>
    <property type="match status" value="1"/>
</dbReference>
<dbReference type="SUPFAM" id="SSF51366">
    <property type="entry name" value="Ribulose-phoshate binding barrel"/>
    <property type="match status" value="1"/>
</dbReference>
<name>TRPF_AZOC5</name>
<proteinExistence type="inferred from homology"/>
<sequence>MAIEVKICGLSTAETLEAALAAGADLVGFVHFPKSPRHVPLEAAPALSRAVAGRAAKVLLLVDPDDATLAAAVAAFQPDIIQLHGKESPERVAAIRARTGRPVMKALPVSGPADLAVVPAYAAVADRLLFDAKPAPDDTLPGGNGRVFDWTLLAGLDPGRPVMLSGGLDAGNVSQALSVVRLDGVDVSSGVETAPGLKSPEKILAFVRAVKAAEAASRPSRLKKVEAP</sequence>
<organism>
    <name type="scientific">Azorhizobium caulinodans (strain ATCC 43989 / DSM 5975 / JCM 20966 / LMG 6465 / NBRC 14845 / NCIMB 13405 / ORS 571)</name>
    <dbReference type="NCBI Taxonomy" id="438753"/>
    <lineage>
        <taxon>Bacteria</taxon>
        <taxon>Pseudomonadati</taxon>
        <taxon>Pseudomonadota</taxon>
        <taxon>Alphaproteobacteria</taxon>
        <taxon>Hyphomicrobiales</taxon>
        <taxon>Xanthobacteraceae</taxon>
        <taxon>Azorhizobium</taxon>
    </lineage>
</organism>